<organism>
    <name type="scientific">Dictyostelium discoideum</name>
    <name type="common">Social amoeba</name>
    <dbReference type="NCBI Taxonomy" id="44689"/>
    <lineage>
        <taxon>Eukaryota</taxon>
        <taxon>Amoebozoa</taxon>
        <taxon>Evosea</taxon>
        <taxon>Eumycetozoa</taxon>
        <taxon>Dictyostelia</taxon>
        <taxon>Dictyosteliales</taxon>
        <taxon>Dictyosteliaceae</taxon>
        <taxon>Dictyostelium</taxon>
    </lineage>
</organism>
<evidence type="ECO:0000250" key="1"/>
<evidence type="ECO:0000255" key="2"/>
<evidence type="ECO:0000255" key="3">
    <source>
        <dbReference type="PROSITE-ProRule" id="PRU00192"/>
    </source>
</evidence>
<evidence type="ECO:0000255" key="4">
    <source>
        <dbReference type="PROSITE-ProRule" id="PRU00782"/>
    </source>
</evidence>
<evidence type="ECO:0000255" key="5">
    <source>
        <dbReference type="PROSITE-ProRule" id="PRU01093"/>
    </source>
</evidence>
<evidence type="ECO:0000256" key="6">
    <source>
        <dbReference type="SAM" id="MobiDB-lite"/>
    </source>
</evidence>
<evidence type="ECO:0000269" key="7">
    <source>
    </source>
</evidence>
<evidence type="ECO:0000269" key="8">
    <source>
    </source>
</evidence>
<evidence type="ECO:0000269" key="9">
    <source>
    </source>
</evidence>
<evidence type="ECO:0000269" key="10">
    <source>
    </source>
</evidence>
<evidence type="ECO:0000269" key="11">
    <source>
    </source>
</evidence>
<evidence type="ECO:0000269" key="12">
    <source>
    </source>
</evidence>
<evidence type="ECO:0000269" key="13">
    <source>
    </source>
</evidence>
<evidence type="ECO:0000305" key="14"/>
<reference key="1">
    <citation type="journal article" date="1989" name="Proc. Natl. Acad. Sci. U.S.A.">
        <title>Dictyostelium discoideum contains a gene encoding a myosin I heavy chain.</title>
        <authorList>
            <person name="Jung G."/>
            <person name="Saxe C.L. III"/>
            <person name="Kimmel A.R."/>
            <person name="Hammer J.A. III"/>
        </authorList>
    </citation>
    <scope>NUCLEOTIDE SEQUENCE [GENOMIC DNA]</scope>
    <source>
        <strain>AX3</strain>
    </source>
</reference>
<reference key="2">
    <citation type="journal article" date="2005" name="Nature">
        <title>The genome of the social amoeba Dictyostelium discoideum.</title>
        <authorList>
            <person name="Eichinger L."/>
            <person name="Pachebat J.A."/>
            <person name="Gloeckner G."/>
            <person name="Rajandream M.A."/>
            <person name="Sucgang R."/>
            <person name="Berriman M."/>
            <person name="Song J."/>
            <person name="Olsen R."/>
            <person name="Szafranski K."/>
            <person name="Xu Q."/>
            <person name="Tunggal B."/>
            <person name="Kummerfeld S."/>
            <person name="Madera M."/>
            <person name="Konfortov B.A."/>
            <person name="Rivero F."/>
            <person name="Bankier A.T."/>
            <person name="Lehmann R."/>
            <person name="Hamlin N."/>
            <person name="Davies R."/>
            <person name="Gaudet P."/>
            <person name="Fey P."/>
            <person name="Pilcher K."/>
            <person name="Chen G."/>
            <person name="Saunders D."/>
            <person name="Sodergren E.J."/>
            <person name="Davis P."/>
            <person name="Kerhornou A."/>
            <person name="Nie X."/>
            <person name="Hall N."/>
            <person name="Anjard C."/>
            <person name="Hemphill L."/>
            <person name="Bason N."/>
            <person name="Farbrother P."/>
            <person name="Desany B."/>
            <person name="Just E."/>
            <person name="Morio T."/>
            <person name="Rost R."/>
            <person name="Churcher C.M."/>
            <person name="Cooper J."/>
            <person name="Haydock S."/>
            <person name="van Driessche N."/>
            <person name="Cronin A."/>
            <person name="Goodhead I."/>
            <person name="Muzny D.M."/>
            <person name="Mourier T."/>
            <person name="Pain A."/>
            <person name="Lu M."/>
            <person name="Harper D."/>
            <person name="Lindsay R."/>
            <person name="Hauser H."/>
            <person name="James K.D."/>
            <person name="Quiles M."/>
            <person name="Madan Babu M."/>
            <person name="Saito T."/>
            <person name="Buchrieser C."/>
            <person name="Wardroper A."/>
            <person name="Felder M."/>
            <person name="Thangavelu M."/>
            <person name="Johnson D."/>
            <person name="Knights A."/>
            <person name="Loulseged H."/>
            <person name="Mungall K.L."/>
            <person name="Oliver K."/>
            <person name="Price C."/>
            <person name="Quail M.A."/>
            <person name="Urushihara H."/>
            <person name="Hernandez J."/>
            <person name="Rabbinowitsch E."/>
            <person name="Steffen D."/>
            <person name="Sanders M."/>
            <person name="Ma J."/>
            <person name="Kohara Y."/>
            <person name="Sharp S."/>
            <person name="Simmonds M.N."/>
            <person name="Spiegler S."/>
            <person name="Tivey A."/>
            <person name="Sugano S."/>
            <person name="White B."/>
            <person name="Walker D."/>
            <person name="Woodward J.R."/>
            <person name="Winckler T."/>
            <person name="Tanaka Y."/>
            <person name="Shaulsky G."/>
            <person name="Schleicher M."/>
            <person name="Weinstock G.M."/>
            <person name="Rosenthal A."/>
            <person name="Cox E.C."/>
            <person name="Chisholm R.L."/>
            <person name="Gibbs R.A."/>
            <person name="Loomis W.F."/>
            <person name="Platzer M."/>
            <person name="Kay R.R."/>
            <person name="Williams J.G."/>
            <person name="Dear P.H."/>
            <person name="Noegel A.A."/>
            <person name="Barrell B.G."/>
            <person name="Kuspa A."/>
        </authorList>
    </citation>
    <scope>NUCLEOTIDE SEQUENCE [LARGE SCALE GENOMIC DNA]</scope>
    <source>
        <strain>AX4</strain>
    </source>
</reference>
<reference key="3">
    <citation type="journal article" date="1993" name="J. Biol. Chem.">
        <title>Sequence, expression pattern, intracellular localization, and targeted disruption of the Dictyostelium myosin ID heavy chain isoform.</title>
        <authorList>
            <person name="Jung G."/>
            <person name="Fukui Y."/>
            <person name="Martin B."/>
            <person name="Hammer J.A. III"/>
        </authorList>
    </citation>
    <scope>PROTEIN SEQUENCE OF 481-490; 656-666 AND 783-798</scope>
    <scope>SUBCELLULAR LOCATION</scope>
    <source>
        <strain>AX3</strain>
    </source>
</reference>
<reference key="4">
    <citation type="journal article" date="1989" name="Nature">
        <title>Myosin I is located at the leading edges of locomoting Dictyostelium amoebae.</title>
        <authorList>
            <person name="Fukui Y."/>
            <person name="Lynch T.J."/>
            <person name="Brzeska H."/>
            <person name="Korn E.D."/>
        </authorList>
    </citation>
    <scope>SUBCELLULAR LOCATION</scope>
</reference>
<reference key="5">
    <citation type="journal article" date="1990" name="J. Cell Biol.">
        <title>Generation and characterization of Dictyostelium cells deficient in a myosin I heavy chain isoform.</title>
        <authorList>
            <person name="Jung G."/>
            <person name="Hammer J.A. III"/>
        </authorList>
    </citation>
    <scope>DISRUPTION PHENOTYPE</scope>
</reference>
<reference key="6">
    <citation type="journal article" date="1991" name="Cell Motil. Cytoskeleton">
        <title>Myosin IB null mutants of Dictyostelium exhibit abnormalities in motility.</title>
        <authorList>
            <person name="Wessels D."/>
            <person name="Murray J."/>
            <person name="Jung G."/>
            <person name="Hammer J.A. III"/>
            <person name="Soll D.R."/>
        </authorList>
    </citation>
    <scope>DISRUPTION PHENOTYPE</scope>
</reference>
<reference key="7">
    <citation type="journal article" date="1995" name="J. Cell Biol.">
        <title>Dictyostelium myosin I double mutants exhibit conditional defects in pinocytosis.</title>
        <authorList>
            <person name="Novak K.D."/>
            <person name="Peterson M.D."/>
            <person name="Reedy M.C."/>
            <person name="Titus M.A."/>
        </authorList>
    </citation>
    <scope>DISRUPTION PHENOTYPE</scope>
</reference>
<reference key="8">
    <citation type="journal article" date="1996" name="Eur. J. Cell Biol.">
        <title>Localization of Dictyostelium myoB and myoD to filopodia and cell-cell contact sites using isoform-specific antibodies.</title>
        <authorList>
            <person name="Morita Y.S."/>
            <person name="Jung G."/>
            <person name="Hammer J.A. III"/>
            <person name="Fukui Y."/>
        </authorList>
    </citation>
    <scope>SUBCELLULAR LOCATION</scope>
</reference>
<reference key="9">
    <citation type="journal article" date="1996" name="J. Cell Biol.">
        <title>Dictyostelium mutants lacking multiple classic myosin I isoforms reveal combinations of shared and distinct functions.</title>
        <authorList>
            <person name="Jung G."/>
            <person name="Wu X."/>
            <person name="Hammer J.A. III"/>
        </authorList>
    </citation>
    <scope>SUBCELLULAR LOCATION</scope>
    <scope>DISRUPTION PHENOTYPE</scope>
    <scope>DEVELOPMENTAL STAGE</scope>
    <scope>FUNCTION</scope>
</reference>
<reference key="10">
    <citation type="journal article" date="1997" name="J. Cell Biol.">
        <title>Myosin I overexpression impairs cell migration.</title>
        <authorList>
            <person name="Novak K.D."/>
            <person name="Titus M.A."/>
        </authorList>
    </citation>
    <scope>FUNCTION</scope>
</reference>
<reference key="11">
    <citation type="journal article" date="1998" name="Mol. Biol. Cell">
        <title>The myosin I SH3 domain and TEDS rule phosphorylation site are required for in vivo function.</title>
        <authorList>
            <person name="Novak K.D."/>
            <person name="Titus M.A."/>
        </authorList>
    </citation>
    <scope>DISRUPTION PHENOTYPE</scope>
    <scope>MUTAGENESIS OF SER-332</scope>
</reference>
<reference key="12">
    <citation type="journal article" date="2006" name="BMC Genomics">
        <title>Thirteen is enough: the myosins of Dictyostelium discoideum and their light chains.</title>
        <authorList>
            <person name="Kollmar M."/>
        </authorList>
    </citation>
    <scope>NOMENCLATURE</scope>
</reference>
<reference key="13">
    <citation type="journal article" date="2006" name="J. Biol. Chem.">
        <title>Identification and characterization of an 8-kDa light chain associated with Dictyostelium discoideum MyoB, a class I myosin.</title>
        <authorList>
            <person name="Crawley S.W."/>
            <person name="de la Roche M.A."/>
            <person name="Lee S.F."/>
            <person name="Li Z."/>
            <person name="Chitayat S."/>
            <person name="Smith S.P."/>
            <person name="Cote G.P."/>
        </authorList>
    </citation>
    <scope>FUNCTION</scope>
    <scope>MUTAGENESIS OF SER-332</scope>
</reference>
<comment type="function">
    <text evidence="7 11 12">Myosin is a protein that binds to actin and has ATPase activity that is activated by actin. Myosin IB may have a role in chemotaxis and aggregation; it could serve to stabilize and even retract cortical structures, such as pseudopods and lamellopods. Involved in the whole cell motility of aggregation-stages cells. Overexpression results in significant decrease in the rate of cellular translocation and fluid-phase pinocytosis and abnormalities in the normal rearrangement of the actin cytoskeleton.</text>
</comment>
<comment type="subunit">
    <text>Myosin I heavy chain is single-headed. Dimer of a heavy and a light chain. Inability to self-assemble into filaments.</text>
</comment>
<comment type="subcellular location">
    <subcellularLocation>
        <location>Cell projection</location>
        <location>Pseudopodium</location>
    </subcellularLocation>
    <subcellularLocation>
        <location>Cytoplasm</location>
        <location>Cell cortex</location>
    </subcellularLocation>
    <text>Highest concentration just beneath the plasma membrane in the anterior pseudopod at the leading edge of the cell and at sites of cell-cell contact in both stationary and aggregation stage cells. Also found in macropinocytic structures.</text>
</comment>
<comment type="developmental stage">
    <text evidence="11">Rises dramatically during early development.</text>
</comment>
<comment type="domain">
    <text>Myosin tail domain binds directly to anionic phospholipid membranes; myosins I could therefore move actin relative to membranes and vice versa. TH.2 and SH3 bind tightly to F-actin; this together with the nucleotide-sensitive site in the head, allows single molecules of myosin I to cross-link actin filaments.</text>
</comment>
<comment type="disruption phenotype">
    <text evidence="8 9 10 11 13">Shows defects in pseudopod formation and translocation. Also shows slower speed of locomoting, aggregation-stage cells and significant reduction in initial rate of phagocytosis. MyoB and myoC double mutant exhibits profound defects in growth, endocytosis and rearrangement of F-actin. Expression of the full-length myoB heavy chain in these cells fully rescues the double mutant defects. myoB and myoD double mutant exhibits reduction in the speed of whole cell translocation. myoB, myoC and myoD triple mutant exhibits reduction in the speed of whole cell translocation.</text>
</comment>
<comment type="similarity">
    <text evidence="14">Belongs to the TRAFAC class myosin-kinesin ATPase superfamily. Myosin family.</text>
</comment>
<sequence>MSKKVQAKQGTDDLVMLPKVSEDEICENLKKRYMNDFIYTNIGPVLISVNPFRNLNNSGPDFIEAYRGKHAQEVPPHVYQLAESAYRAMKNDQENQCVIISGESGAGKTEAAKLIMGYVSAISGSTEKVEYVKHVILESNPLLEAFGNAKTLRNNNSSRFGKYFEIQFDKAGDPVGGKIYNYLLEKSRVVYQNPGERNFHIFYQLLAGASAQEKRDYVLSSPESYYYLNQSQCYTVDGINDVSDYAEVRQAMDTIGLTAQEQSDIIRIVACVLHIGNIYFIEDDKGNAAIYDPNALELAASMLCIDSATLQNAILFRVINTGGAGGAGNRRSTYNVPQNVEQANGTRDALARTIYDRMFSWLVERVNQSLSYYKSPYQNVIGILDIFGFEIFEKNGFEQFCINFVNEKLQQFFIELTLKAEQEEYVREGIKWEPIKYFNNQIVCDLIEGKSPPGIFSLLDDICSTLHAQSTGTDQKFLEKMAGIYDGHLHWRGMTGAFAIKHYAGEVTYEAEGFSDKNKDTLFFDLIEAIQCSKMPFLASLFNEDTGSLQKKRPTTAGFKIKTSAGELMKALSQCTPHYIRCIKPNETKKAKDWENSRVKHQVQYLGLLENVRVRRAGFAYRNTFDKVLKRYKKLSSKTWGIWGEWKGDAIEGCKTIFQDMNLEAGQWQLGKTKVFIRHPETVFLLEEALDKKDFDCTAKIQKAFRNWKAKKHSLEQRAQIAHMFKDKKERQRNSIDRKFTSDYIDFENQFGLQEAMQNAHKKERVVFADTVIKIDRRAKQKNYEMVLTDQALYFVEKSIKKKVLVHTLIRRVGLREIKGVSISTLSDNVIVFHLPEHDQVIENDKKTEIIIVLVEYFKAIGGGSLNVQFSDRINYTLKKGEQKEISFQKSEQCPTLVVKKGGKGLIGTIASGLPSSTDSTPKNYNPNSMSQASSRPAPQQSAGRGRGMPQGAGQPQPQQPQQQQRPMPQPQQGGGARPMPQPQQGGGARPMGAPQQGGAPQQGAGRQLPQPTQQGGAPGGRGAPMGRGAPGGGPAGAGGRPLPTVAKPAPQPSRPTAKALYDYDASSTDELSFKEGDIIFIVQKDNGGWTQGELKSGQKGWAPTNYLQYN</sequence>
<name>MYOB_DICDI</name>
<protein>
    <recommendedName>
        <fullName>Myosin IB heavy chain</fullName>
    </recommendedName>
</protein>
<keyword id="KW-0009">Actin-binding</keyword>
<keyword id="KW-0067">ATP-binding</keyword>
<keyword id="KW-0966">Cell projection</keyword>
<keyword id="KW-0145">Chemotaxis</keyword>
<keyword id="KW-0963">Cytoplasm</keyword>
<keyword id="KW-0903">Direct protein sequencing</keyword>
<keyword id="KW-0505">Motor protein</keyword>
<keyword id="KW-0518">Myosin</keyword>
<keyword id="KW-0547">Nucleotide-binding</keyword>
<keyword id="KW-0597">Phosphoprotein</keyword>
<keyword id="KW-1185">Reference proteome</keyword>
<keyword id="KW-0728">SH3 domain</keyword>
<feature type="chain" id="PRO_0000123366" description="Myosin IB heavy chain">
    <location>
        <begin position="1"/>
        <end position="1111"/>
    </location>
</feature>
<feature type="domain" description="Myosin motor" evidence="4">
    <location>
        <begin position="9"/>
        <end position="691"/>
    </location>
</feature>
<feature type="domain" description="TH1" evidence="5">
    <location>
        <begin position="729"/>
        <end position="913"/>
    </location>
</feature>
<feature type="domain" description="SH3" evidence="3">
    <location>
        <begin position="1053"/>
        <end position="1111"/>
    </location>
</feature>
<feature type="region of interest" description="Actin-binding">
    <location>
        <begin position="547"/>
        <end position="627"/>
    </location>
</feature>
<feature type="region of interest" description="Disordered" evidence="6">
    <location>
        <begin position="910"/>
        <end position="1058"/>
    </location>
</feature>
<feature type="compositionally biased region" description="Polar residues" evidence="6">
    <location>
        <begin position="914"/>
        <end position="928"/>
    </location>
</feature>
<feature type="compositionally biased region" description="Low complexity" evidence="6">
    <location>
        <begin position="929"/>
        <end position="944"/>
    </location>
</feature>
<feature type="compositionally biased region" description="Low complexity" evidence="6">
    <location>
        <begin position="952"/>
        <end position="967"/>
    </location>
</feature>
<feature type="compositionally biased region" description="Low complexity" evidence="6">
    <location>
        <begin position="991"/>
        <end position="1012"/>
    </location>
</feature>
<feature type="compositionally biased region" description="Gly residues" evidence="6">
    <location>
        <begin position="1017"/>
        <end position="1040"/>
    </location>
</feature>
<feature type="binding site" evidence="2">
    <location>
        <begin position="102"/>
        <end position="109"/>
    </location>
    <ligand>
        <name>ATP</name>
        <dbReference type="ChEBI" id="CHEBI:30616"/>
    </ligand>
</feature>
<feature type="modified residue" description="Phosphoserine" evidence="1">
    <location>
        <position position="332"/>
    </location>
</feature>
<feature type="mutagenesis site" description="Fail to complement the null phenotype." evidence="7 13">
    <original>S</original>
    <variation>A</variation>
    <location>
        <position position="332"/>
    </location>
</feature>
<feature type="mutagenesis site" description="Forms a complex in the presence and absence of Ca(2+)." evidence="7 13">
    <original>S</original>
    <variation>E</variation>
    <location>
        <position position="332"/>
    </location>
</feature>
<feature type="sequence conflict" description="In Ref. 1; AAA33229." evidence="14" ref="1">
    <original>A</original>
    <variation>R</variation>
    <location>
        <position position="207"/>
    </location>
</feature>
<feature type="sequence conflict" description="In Ref. 1; AAA33229." evidence="14" ref="1">
    <original>R</original>
    <variation>K</variation>
    <location>
        <position position="365"/>
    </location>
</feature>
<gene>
    <name type="primary">myoB</name>
    <name type="synonym">dmiB</name>
    <name type="synonym">myoA</name>
    <name type="ORF">DDB_G0289117</name>
</gene>
<dbReference type="EMBL" id="M26037">
    <property type="protein sequence ID" value="AAA33229.1"/>
    <property type="molecule type" value="Genomic_DNA"/>
</dbReference>
<dbReference type="EMBL" id="AAFI02000130">
    <property type="protein sequence ID" value="EAL62866.1"/>
    <property type="molecule type" value="Genomic_DNA"/>
</dbReference>
<dbReference type="PIR" id="A33284">
    <property type="entry name" value="A33284"/>
</dbReference>
<dbReference type="RefSeq" id="XP_636382.1">
    <property type="nucleotide sequence ID" value="XM_631290.1"/>
</dbReference>
<dbReference type="SMR" id="P34092"/>
<dbReference type="FunCoup" id="P34092">
    <property type="interactions" value="16"/>
</dbReference>
<dbReference type="STRING" id="44689.P34092"/>
<dbReference type="PaxDb" id="44689-DDB0191351"/>
<dbReference type="EnsemblProtists" id="EAL62866">
    <property type="protein sequence ID" value="EAL62866"/>
    <property type="gene ID" value="DDB_G0289117"/>
</dbReference>
<dbReference type="GeneID" id="8626983"/>
<dbReference type="KEGG" id="ddi:DDB_G0289117"/>
<dbReference type="dictyBase" id="DDB_G0289117">
    <property type="gene designation" value="myoB"/>
</dbReference>
<dbReference type="VEuPathDB" id="AmoebaDB:DDB_G0289117"/>
<dbReference type="eggNOG" id="KOG0162">
    <property type="taxonomic scope" value="Eukaryota"/>
</dbReference>
<dbReference type="HOGENOM" id="CLU_000192_7_6_1"/>
<dbReference type="InParanoid" id="P34092"/>
<dbReference type="OMA" id="NDQENQC"/>
<dbReference type="PhylomeDB" id="P34092"/>
<dbReference type="PRO" id="PR:P34092"/>
<dbReference type="Proteomes" id="UP000002195">
    <property type="component" value="Chromosome 5"/>
</dbReference>
<dbReference type="GO" id="GO:0015629">
    <property type="term" value="C:actin cytoskeleton"/>
    <property type="evidence" value="ECO:0000318"/>
    <property type="project" value="GO_Central"/>
</dbReference>
<dbReference type="GO" id="GO:0062201">
    <property type="term" value="C:actin wave"/>
    <property type="evidence" value="ECO:0000314"/>
    <property type="project" value="dictyBase"/>
</dbReference>
<dbReference type="GO" id="GO:0098858">
    <property type="term" value="C:actin-based cell projection"/>
    <property type="evidence" value="ECO:0000314"/>
    <property type="project" value="dictyBase"/>
</dbReference>
<dbReference type="GO" id="GO:0042641">
    <property type="term" value="C:actomyosin"/>
    <property type="evidence" value="ECO:0000314"/>
    <property type="project" value="dictyBase"/>
</dbReference>
<dbReference type="GO" id="GO:0031252">
    <property type="term" value="C:cell leading edge"/>
    <property type="evidence" value="ECO:0000314"/>
    <property type="project" value="dictyBase"/>
</dbReference>
<dbReference type="GO" id="GO:0005911">
    <property type="term" value="C:cell-cell junction"/>
    <property type="evidence" value="ECO:0000314"/>
    <property type="project" value="dictyBase"/>
</dbReference>
<dbReference type="GO" id="GO:0005737">
    <property type="term" value="C:cytoplasm"/>
    <property type="evidence" value="ECO:0000318"/>
    <property type="project" value="GO_Central"/>
</dbReference>
<dbReference type="GO" id="GO:0005829">
    <property type="term" value="C:cytosol"/>
    <property type="evidence" value="ECO:0000314"/>
    <property type="project" value="dictyBase"/>
</dbReference>
<dbReference type="GO" id="GO:0005769">
    <property type="term" value="C:early endosome"/>
    <property type="evidence" value="ECO:0000314"/>
    <property type="project" value="dictyBase"/>
</dbReference>
<dbReference type="GO" id="GO:0030175">
    <property type="term" value="C:filopodium"/>
    <property type="evidence" value="ECO:0000314"/>
    <property type="project" value="dictyBase"/>
</dbReference>
<dbReference type="GO" id="GO:0061851">
    <property type="term" value="C:leading edge of lamellipodium"/>
    <property type="evidence" value="ECO:0000314"/>
    <property type="project" value="dictyBase"/>
</dbReference>
<dbReference type="GO" id="GO:0070685">
    <property type="term" value="C:macropinocytic cup"/>
    <property type="evidence" value="ECO:0000314"/>
    <property type="project" value="dictyBase"/>
</dbReference>
<dbReference type="GO" id="GO:0070687">
    <property type="term" value="C:macropinocytic cup cytoskeleton"/>
    <property type="evidence" value="ECO:0000314"/>
    <property type="project" value="dictyBase"/>
</dbReference>
<dbReference type="GO" id="GO:0045160">
    <property type="term" value="C:myosin I complex"/>
    <property type="evidence" value="ECO:0000314"/>
    <property type="project" value="dictyBase"/>
</dbReference>
<dbReference type="GO" id="GO:0097203">
    <property type="term" value="C:phagocytic cup lip"/>
    <property type="evidence" value="ECO:0000314"/>
    <property type="project" value="dictyBase"/>
</dbReference>
<dbReference type="GO" id="GO:0045335">
    <property type="term" value="C:phagocytic vesicle"/>
    <property type="evidence" value="ECO:0000314"/>
    <property type="project" value="dictyBase"/>
</dbReference>
<dbReference type="GO" id="GO:0030670">
    <property type="term" value="C:phagocytic vesicle membrane"/>
    <property type="evidence" value="ECO:0000314"/>
    <property type="project" value="dictyBase"/>
</dbReference>
<dbReference type="GO" id="GO:0005886">
    <property type="term" value="C:plasma membrane"/>
    <property type="evidence" value="ECO:0000314"/>
    <property type="project" value="dictyBase"/>
</dbReference>
<dbReference type="GO" id="GO:0031143">
    <property type="term" value="C:pseudopodium"/>
    <property type="evidence" value="ECO:0007669"/>
    <property type="project" value="UniProtKB-SubCell"/>
</dbReference>
<dbReference type="GO" id="GO:0051015">
    <property type="term" value="F:actin filament binding"/>
    <property type="evidence" value="ECO:0000314"/>
    <property type="project" value="dictyBase"/>
</dbReference>
<dbReference type="GO" id="GO:0005524">
    <property type="term" value="F:ATP binding"/>
    <property type="evidence" value="ECO:0000314"/>
    <property type="project" value="dictyBase"/>
</dbReference>
<dbReference type="GO" id="GO:0000146">
    <property type="term" value="F:microfilament motor activity"/>
    <property type="evidence" value="ECO:0000314"/>
    <property type="project" value="dictyBase"/>
</dbReference>
<dbReference type="GO" id="GO:0032027">
    <property type="term" value="F:myosin light chain binding"/>
    <property type="evidence" value="ECO:0000314"/>
    <property type="project" value="dictyBase"/>
</dbReference>
<dbReference type="GO" id="GO:0005543">
    <property type="term" value="F:phospholipid binding"/>
    <property type="evidence" value="ECO:0000314"/>
    <property type="project" value="dictyBase"/>
</dbReference>
<dbReference type="GO" id="GO:0030036">
    <property type="term" value="P:actin cytoskeleton organization"/>
    <property type="evidence" value="ECO:0000316"/>
    <property type="project" value="dictyBase"/>
</dbReference>
<dbReference type="GO" id="GO:0007015">
    <property type="term" value="P:actin filament organization"/>
    <property type="evidence" value="ECO:0000318"/>
    <property type="project" value="GO_Central"/>
</dbReference>
<dbReference type="GO" id="GO:0033275">
    <property type="term" value="P:actin-myosin filament sliding"/>
    <property type="evidence" value="ECO:0000314"/>
    <property type="project" value="dictyBase"/>
</dbReference>
<dbReference type="GO" id="GO:0048870">
    <property type="term" value="P:cell motility"/>
    <property type="evidence" value="ECO:0000315"/>
    <property type="project" value="dictyBase"/>
</dbReference>
<dbReference type="GO" id="GO:0043327">
    <property type="term" value="P:chemotaxis to cAMP"/>
    <property type="evidence" value="ECO:0000315"/>
    <property type="project" value="dictyBase"/>
</dbReference>
<dbReference type="GO" id="GO:0006897">
    <property type="term" value="P:endocytosis"/>
    <property type="evidence" value="ECO:0000318"/>
    <property type="project" value="GO_Central"/>
</dbReference>
<dbReference type="GO" id="GO:0016197">
    <property type="term" value="P:endosomal transport"/>
    <property type="evidence" value="ECO:0000316"/>
    <property type="project" value="dictyBase"/>
</dbReference>
<dbReference type="GO" id="GO:0006887">
    <property type="term" value="P:exocytosis"/>
    <property type="evidence" value="ECO:0000270"/>
    <property type="project" value="dictyBase"/>
</dbReference>
<dbReference type="GO" id="GO:0046847">
    <property type="term" value="P:filopodium assembly"/>
    <property type="evidence" value="ECO:0000316"/>
    <property type="project" value="dictyBase"/>
</dbReference>
<dbReference type="GO" id="GO:0120320">
    <property type="term" value="P:lateral pseudopodium retraction"/>
    <property type="evidence" value="ECO:0000315"/>
    <property type="project" value="dictyBase"/>
</dbReference>
<dbReference type="GO" id="GO:0006909">
    <property type="term" value="P:phagocytosis"/>
    <property type="evidence" value="ECO:0000315"/>
    <property type="project" value="dictyBase"/>
</dbReference>
<dbReference type="GO" id="GO:0044655">
    <property type="term" value="P:phagosome reneutralization"/>
    <property type="evidence" value="ECO:0000315"/>
    <property type="project" value="dictyBase"/>
</dbReference>
<dbReference type="GO" id="GO:0006907">
    <property type="term" value="P:pinocytosis"/>
    <property type="evidence" value="ECO:0000316"/>
    <property type="project" value="dictyBase"/>
</dbReference>
<dbReference type="GO" id="GO:0044656">
    <property type="term" value="P:regulation of post-lysosomal vacuole size"/>
    <property type="evidence" value="ECO:0000315"/>
    <property type="project" value="dictyBase"/>
</dbReference>
<dbReference type="GO" id="GO:1903013">
    <property type="term" value="P:response to differentiation-inducing factor 1"/>
    <property type="evidence" value="ECO:0007005"/>
    <property type="project" value="dictyBase"/>
</dbReference>
<dbReference type="GO" id="GO:0051707">
    <property type="term" value="P:response to other organism"/>
    <property type="evidence" value="ECO:0000304"/>
    <property type="project" value="dictyBase"/>
</dbReference>
<dbReference type="GO" id="GO:0030587">
    <property type="term" value="P:sorocarp development"/>
    <property type="evidence" value="ECO:0000315"/>
    <property type="project" value="dictyBase"/>
</dbReference>
<dbReference type="CDD" id="cd01378">
    <property type="entry name" value="MYSc_Myo1"/>
    <property type="match status" value="1"/>
</dbReference>
<dbReference type="CDD" id="cd00174">
    <property type="entry name" value="SH3"/>
    <property type="match status" value="1"/>
</dbReference>
<dbReference type="FunFam" id="1.10.10.820:FF:000001">
    <property type="entry name" value="Myosin heavy chain"/>
    <property type="match status" value="1"/>
</dbReference>
<dbReference type="FunFam" id="1.20.58.530:FF:000007">
    <property type="entry name" value="Myosin IE"/>
    <property type="match status" value="1"/>
</dbReference>
<dbReference type="FunFam" id="2.30.30.40:FF:000072">
    <property type="entry name" value="Unconventional Myosin IB"/>
    <property type="match status" value="1"/>
</dbReference>
<dbReference type="Gene3D" id="1.10.10.820">
    <property type="match status" value="1"/>
</dbReference>
<dbReference type="Gene3D" id="1.20.5.4820">
    <property type="match status" value="1"/>
</dbReference>
<dbReference type="Gene3D" id="1.20.58.530">
    <property type="match status" value="1"/>
</dbReference>
<dbReference type="Gene3D" id="3.40.850.10">
    <property type="entry name" value="Kinesin motor domain"/>
    <property type="match status" value="1"/>
</dbReference>
<dbReference type="Gene3D" id="1.20.120.720">
    <property type="entry name" value="Myosin VI head, motor domain, U50 subdomain"/>
    <property type="match status" value="1"/>
</dbReference>
<dbReference type="Gene3D" id="2.30.30.40">
    <property type="entry name" value="SH3 Domains"/>
    <property type="match status" value="1"/>
</dbReference>
<dbReference type="InterPro" id="IPR036961">
    <property type="entry name" value="Kinesin_motor_dom_sf"/>
</dbReference>
<dbReference type="InterPro" id="IPR001609">
    <property type="entry name" value="Myosin_head_motor_dom-like"/>
</dbReference>
<dbReference type="InterPro" id="IPR010926">
    <property type="entry name" value="Myosin_TH1"/>
</dbReference>
<dbReference type="InterPro" id="IPR036072">
    <property type="entry name" value="MYSc_Myo1"/>
</dbReference>
<dbReference type="InterPro" id="IPR027417">
    <property type="entry name" value="P-loop_NTPase"/>
</dbReference>
<dbReference type="InterPro" id="IPR036028">
    <property type="entry name" value="SH3-like_dom_sf"/>
</dbReference>
<dbReference type="InterPro" id="IPR001452">
    <property type="entry name" value="SH3_domain"/>
</dbReference>
<dbReference type="PANTHER" id="PTHR13140">
    <property type="entry name" value="MYOSIN"/>
    <property type="match status" value="1"/>
</dbReference>
<dbReference type="PANTHER" id="PTHR13140:SF729">
    <property type="entry name" value="UNCONVENTIONAL MYOSIN-IE"/>
    <property type="match status" value="1"/>
</dbReference>
<dbReference type="Pfam" id="PF00063">
    <property type="entry name" value="Myosin_head"/>
    <property type="match status" value="1"/>
</dbReference>
<dbReference type="Pfam" id="PF06017">
    <property type="entry name" value="Myosin_TH1"/>
    <property type="match status" value="1"/>
</dbReference>
<dbReference type="Pfam" id="PF00018">
    <property type="entry name" value="SH3_1"/>
    <property type="match status" value="1"/>
</dbReference>
<dbReference type="PRINTS" id="PR00193">
    <property type="entry name" value="MYOSINHEAVY"/>
</dbReference>
<dbReference type="PRINTS" id="PR00452">
    <property type="entry name" value="SH3DOMAIN"/>
</dbReference>
<dbReference type="SMART" id="SM00242">
    <property type="entry name" value="MYSc"/>
    <property type="match status" value="1"/>
</dbReference>
<dbReference type="SMART" id="SM00326">
    <property type="entry name" value="SH3"/>
    <property type="match status" value="1"/>
</dbReference>
<dbReference type="SUPFAM" id="SSF52540">
    <property type="entry name" value="P-loop containing nucleoside triphosphate hydrolases"/>
    <property type="match status" value="1"/>
</dbReference>
<dbReference type="SUPFAM" id="SSF50044">
    <property type="entry name" value="SH3-domain"/>
    <property type="match status" value="1"/>
</dbReference>
<dbReference type="PROSITE" id="PS51456">
    <property type="entry name" value="MYOSIN_MOTOR"/>
    <property type="match status" value="1"/>
</dbReference>
<dbReference type="PROSITE" id="PS50002">
    <property type="entry name" value="SH3"/>
    <property type="match status" value="1"/>
</dbReference>
<dbReference type="PROSITE" id="PS51757">
    <property type="entry name" value="TH1"/>
    <property type="match status" value="1"/>
</dbReference>
<accession>P34092</accession>
<accession>Q54HY1</accession>
<proteinExistence type="evidence at protein level"/>